<dbReference type="EMBL" id="AY426671">
    <property type="protein sequence ID" value="AAR04681.1"/>
    <property type="molecule type" value="mRNA"/>
</dbReference>
<dbReference type="RefSeq" id="NP_001032731.1">
    <property type="nucleotide sequence ID" value="NM_001037642.2"/>
</dbReference>
<dbReference type="RefSeq" id="XP_017454204.1">
    <property type="nucleotide sequence ID" value="XM_017598715.1"/>
</dbReference>
<dbReference type="SMR" id="Q6TA48"/>
<dbReference type="STRING" id="10116.ENSRNOP00000067540"/>
<dbReference type="PaxDb" id="10116-ENSRNOP00000067540"/>
<dbReference type="Ensembl" id="ENSRNOT00000073147.2">
    <property type="protein sequence ID" value="ENSRNOP00000067540.1"/>
    <property type="gene ID" value="ENSRNOG00000046165.2"/>
</dbReference>
<dbReference type="GeneID" id="289243"/>
<dbReference type="KEGG" id="rno:289243"/>
<dbReference type="AGR" id="RGD:1590926"/>
<dbReference type="CTD" id="649458"/>
<dbReference type="RGD" id="1590926">
    <property type="gene designation" value="Mptx1"/>
</dbReference>
<dbReference type="eggNOG" id="ENOG502S201">
    <property type="taxonomic scope" value="Eukaryota"/>
</dbReference>
<dbReference type="GeneTree" id="ENSGT01100000263515"/>
<dbReference type="HOGENOM" id="CLU_032051_2_0_1"/>
<dbReference type="InParanoid" id="Q6TA48"/>
<dbReference type="OMA" id="WESPTGI"/>
<dbReference type="OrthoDB" id="62901at9989"/>
<dbReference type="PhylomeDB" id="Q6TA48"/>
<dbReference type="PRO" id="PR:Q6TA48"/>
<dbReference type="Proteomes" id="UP000002494">
    <property type="component" value="Chromosome 13"/>
</dbReference>
<dbReference type="Bgee" id="ENSRNOG00000046165">
    <property type="expression patterns" value="Expressed in thymus and 12 other cell types or tissues"/>
</dbReference>
<dbReference type="GO" id="GO:0005615">
    <property type="term" value="C:extracellular space"/>
    <property type="evidence" value="ECO:0000318"/>
    <property type="project" value="GO_Central"/>
</dbReference>
<dbReference type="GO" id="GO:0001849">
    <property type="term" value="F:complement component C1q complex binding"/>
    <property type="evidence" value="ECO:0000318"/>
    <property type="project" value="GO_Central"/>
</dbReference>
<dbReference type="GO" id="GO:0046872">
    <property type="term" value="F:metal ion binding"/>
    <property type="evidence" value="ECO:0007669"/>
    <property type="project" value="UniProtKB-KW"/>
</dbReference>
<dbReference type="GO" id="GO:0045087">
    <property type="term" value="P:innate immune response"/>
    <property type="evidence" value="ECO:0000318"/>
    <property type="project" value="GO_Central"/>
</dbReference>
<dbReference type="CDD" id="cd00152">
    <property type="entry name" value="PTX"/>
    <property type="match status" value="1"/>
</dbReference>
<dbReference type="FunFam" id="2.60.120.200:FF:000070">
    <property type="entry name" value="Serum amyloid P-component"/>
    <property type="match status" value="1"/>
</dbReference>
<dbReference type="Gene3D" id="2.60.120.200">
    <property type="match status" value="1"/>
</dbReference>
<dbReference type="InterPro" id="IPR013320">
    <property type="entry name" value="ConA-like_dom_sf"/>
</dbReference>
<dbReference type="InterPro" id="IPR001759">
    <property type="entry name" value="Pentraxin-related"/>
</dbReference>
<dbReference type="InterPro" id="IPR051005">
    <property type="entry name" value="Pentraxin_domain"/>
</dbReference>
<dbReference type="PANTHER" id="PTHR45869">
    <property type="entry name" value="C-REACTIVE PROTEIN-RELATED"/>
    <property type="match status" value="1"/>
</dbReference>
<dbReference type="PANTHER" id="PTHR45869:SF6">
    <property type="entry name" value="MUCOSAL PENTRAXIN-RELATED"/>
    <property type="match status" value="1"/>
</dbReference>
<dbReference type="Pfam" id="PF00354">
    <property type="entry name" value="Pentaxin"/>
    <property type="match status" value="1"/>
</dbReference>
<dbReference type="PRINTS" id="PR00895">
    <property type="entry name" value="PENTAXIN"/>
</dbReference>
<dbReference type="SMART" id="SM00159">
    <property type="entry name" value="PTX"/>
    <property type="match status" value="1"/>
</dbReference>
<dbReference type="SUPFAM" id="SSF49899">
    <property type="entry name" value="Concanavalin A-like lectins/glucanases"/>
    <property type="match status" value="1"/>
</dbReference>
<dbReference type="PROSITE" id="PS51828">
    <property type="entry name" value="PTX_2"/>
    <property type="match status" value="1"/>
</dbReference>
<evidence type="ECO:0000250" key="1"/>
<evidence type="ECO:0000255" key="2"/>
<evidence type="ECO:0000255" key="3">
    <source>
        <dbReference type="PROSITE-ProRule" id="PRU01172"/>
    </source>
</evidence>
<evidence type="ECO:0000269" key="4">
    <source>
    </source>
</evidence>
<evidence type="ECO:0000269" key="5">
    <source>
    </source>
</evidence>
<evidence type="ECO:0000269" key="6">
    <source>
    </source>
</evidence>
<evidence type="ECO:0000269" key="7">
    <source>
    </source>
</evidence>
<evidence type="ECO:0000305" key="8"/>
<reference key="1">
    <citation type="journal article" date="2003" name="FASEB J.">
        <title>Mucosal pentraxin (Mptx), a novel rat gene 10-fold down-regulated in colon by dietary heme.</title>
        <authorList>
            <person name="Van Der Meer-Van Kraaij C."/>
            <person name="Van Lieshout E.M.M."/>
            <person name="Kramer E."/>
            <person name="Van Der Meer R."/>
            <person name="Keijer J."/>
        </authorList>
    </citation>
    <scope>NUCLEOTIDE SEQUENCE [MRNA]</scope>
    <scope>INDUCTION</scope>
    <source>
        <strain>Wistar</strain>
        <tissue>Colon</tissue>
    </source>
</reference>
<reference key="2">
    <citation type="journal article" date="2007" name="Genes Nutr.">
        <title>Dietary modulation and structure prediction of rat mucosal pentraxin (Mptx) protein and loss of function in humans.</title>
        <authorList>
            <person name="van der Meer-van Kraaij C."/>
            <person name="Siezen R."/>
            <person name="Kramer E."/>
            <person name="Reinders M."/>
            <person name="Blokzijl H."/>
            <person name="van der Meer R."/>
            <person name="Keijer J."/>
        </authorList>
    </citation>
    <scope>NUCLEOTIDE SEQUENCE [MRNA]</scope>
    <scope>INDUCTION</scope>
    <source>
        <tissue>Colon</tissue>
    </source>
</reference>
<reference key="3">
    <citation type="journal article" date="2005" name="Carcinogenesis">
        <title>Differential gene expression in rat colon by dietary heme and calcium.</title>
        <authorList>
            <person name="van der Meer-van Kraaij C."/>
            <person name="Kramer E."/>
            <person name="Jonker-Termont D."/>
            <person name="Katan M.B."/>
            <person name="van der Meer R."/>
            <person name="Keijer J."/>
        </authorList>
    </citation>
    <scope>TISSUE SPECIFICITY</scope>
    <scope>INDUCTION</scope>
</reference>
<reference key="4">
    <citation type="journal article" date="2006" name="Biochim. Biophys. Acta">
        <title>Complex regulation of mucosal pentraxin (Mptx) revealed by discrete micro-anatomical locations in colon.</title>
        <authorList>
            <person name="Drew J.E."/>
            <person name="Farquharson A.J."/>
            <person name="Keijer J."/>
            <person name="Barrera L.N."/>
        </authorList>
    </citation>
    <scope>TISSUE SPECIFICITY</scope>
    <scope>INDUCTION</scope>
</reference>
<comment type="cofactor">
    <cofactor evidence="1">
        <name>Ca(2+)</name>
        <dbReference type="ChEBI" id="CHEBI:29108"/>
    </cofactor>
    <text evidence="1">Binds 2 calcium ions per subunit.</text>
</comment>
<comment type="subunit">
    <text evidence="1">Homopentamer. Pentraxin (or pentaxin) have a discoid arrangement of 5 non-covalently bound subunits (By similarity).</text>
</comment>
<comment type="subcellular location">
    <subcellularLocation>
        <location evidence="1">Secreted</location>
    </subcellularLocation>
</comment>
<comment type="tissue specificity">
    <text evidence="5 6">Expression is restricted to small intestine, stomach and colon. Within colon, expressed in epithelial cells located within the lower to mid region of transverse and distal crypts, but not in proximal colon.</text>
</comment>
<comment type="induction">
    <text evidence="4 5 6 7">Strongly down-regulated in colon by dietary heme, or by dietary depletion of vitamin E. Up-regulated by calcium.</text>
</comment>
<comment type="similarity">
    <text evidence="8">Belongs to the pentraxin family.</text>
</comment>
<gene>
    <name type="primary">Mptx1</name>
    <name type="synonym">Mptx</name>
</gene>
<feature type="signal peptide" evidence="2">
    <location>
        <begin position="1"/>
        <end position="19"/>
    </location>
</feature>
<feature type="chain" id="PRO_0000342394" description="Mucosal pentraxin">
    <location>
        <begin position="20"/>
        <end position="219"/>
    </location>
</feature>
<feature type="domain" description="Pentraxin (PTX)" evidence="3">
    <location>
        <begin position="24"/>
        <end position="219"/>
    </location>
</feature>
<feature type="binding site" evidence="3">
    <location>
        <position position="77"/>
    </location>
    <ligand>
        <name>Ca(2+)</name>
        <dbReference type="ChEBI" id="CHEBI:29108"/>
        <label>1</label>
    </ligand>
</feature>
<feature type="binding site" evidence="3">
    <location>
        <position position="78"/>
    </location>
    <ligand>
        <name>Ca(2+)</name>
        <dbReference type="ChEBI" id="CHEBI:29108"/>
        <label>1</label>
    </ligand>
</feature>
<feature type="binding site" evidence="3">
    <location>
        <position position="155"/>
    </location>
    <ligand>
        <name>Ca(2+)</name>
        <dbReference type="ChEBI" id="CHEBI:29108"/>
        <label>1</label>
    </ligand>
</feature>
<feature type="binding site" evidence="3">
    <location>
        <position position="155"/>
    </location>
    <ligand>
        <name>Ca(2+)</name>
        <dbReference type="ChEBI" id="CHEBI:29108"/>
        <label>2</label>
    </ligand>
</feature>
<feature type="binding site" evidence="3">
    <location>
        <position position="156"/>
    </location>
    <ligand>
        <name>Ca(2+)</name>
        <dbReference type="ChEBI" id="CHEBI:29108"/>
        <label>1</label>
    </ligand>
</feature>
<feature type="binding site" evidence="3">
    <location>
        <position position="157"/>
    </location>
    <ligand>
        <name>Ca(2+)</name>
        <dbReference type="ChEBI" id="CHEBI:29108"/>
        <label>1</label>
    </ligand>
</feature>
<feature type="binding site" evidence="3">
    <location>
        <position position="157"/>
    </location>
    <ligand>
        <name>Ca(2+)</name>
        <dbReference type="ChEBI" id="CHEBI:29108"/>
        <label>2</label>
    </ligand>
</feature>
<feature type="binding site" evidence="3">
    <location>
        <position position="167"/>
    </location>
    <ligand>
        <name>Ca(2+)</name>
        <dbReference type="ChEBI" id="CHEBI:29108"/>
        <label>2</label>
    </ligand>
</feature>
<feature type="disulfide bond" evidence="3">
    <location>
        <begin position="55"/>
        <end position="114"/>
    </location>
</feature>
<feature type="sequence conflict" description="In Ref. 2; no nucleotide entry." evidence="8" ref="2">
    <original>I</original>
    <variation>V</variation>
    <location>
        <position position="150"/>
    </location>
</feature>
<protein>
    <recommendedName>
        <fullName>Mucosal pentraxin</fullName>
    </recommendedName>
</protein>
<accession>Q6TA48</accession>
<sequence length="219" mass="24332">MEKLIVGTLLLTVLSGGISQSDMDGKAFIFPQESSTAYVSLIPRVKKSLQNFTLCLKAFTDLTRPYSIFSYNTKTQDNEILLFVQNSGEYMFYVGNSAAIFKAPTSLYDPVHICVNWESASGIAEFWLNGKPLGRKGLKKGYTVGGEAKIIIGQEQDSFGGNFDAKQSFVGEIWDVSLWDHVIPLEEAHDSCDGGNLINFRALTYEENGYVVTKPKLWT</sequence>
<name>MPTX_RAT</name>
<organism>
    <name type="scientific">Rattus norvegicus</name>
    <name type="common">Rat</name>
    <dbReference type="NCBI Taxonomy" id="10116"/>
    <lineage>
        <taxon>Eukaryota</taxon>
        <taxon>Metazoa</taxon>
        <taxon>Chordata</taxon>
        <taxon>Craniata</taxon>
        <taxon>Vertebrata</taxon>
        <taxon>Euteleostomi</taxon>
        <taxon>Mammalia</taxon>
        <taxon>Eutheria</taxon>
        <taxon>Euarchontoglires</taxon>
        <taxon>Glires</taxon>
        <taxon>Rodentia</taxon>
        <taxon>Myomorpha</taxon>
        <taxon>Muroidea</taxon>
        <taxon>Muridae</taxon>
        <taxon>Murinae</taxon>
        <taxon>Rattus</taxon>
    </lineage>
</organism>
<proteinExistence type="evidence at transcript level"/>
<keyword id="KW-0106">Calcium</keyword>
<keyword id="KW-1015">Disulfide bond</keyword>
<keyword id="KW-0479">Metal-binding</keyword>
<keyword id="KW-1185">Reference proteome</keyword>
<keyword id="KW-0964">Secreted</keyword>
<keyword id="KW-0732">Signal</keyword>